<keyword id="KW-0072">Autophagy</keyword>
<keyword id="KW-0968">Cytoplasmic vesicle</keyword>
<keyword id="KW-0653">Protein transport</keyword>
<keyword id="KW-1185">Reference proteome</keyword>
<keyword id="KW-0813">Transport</keyword>
<protein>
    <recommendedName>
        <fullName evidence="4">Autophagy-related protein 13b</fullName>
        <shortName evidence="4">AtAPG13b</shortName>
    </recommendedName>
</protein>
<organism>
    <name type="scientific">Arabidopsis thaliana</name>
    <name type="common">Mouse-ear cress</name>
    <dbReference type="NCBI Taxonomy" id="3702"/>
    <lineage>
        <taxon>Eukaryota</taxon>
        <taxon>Viridiplantae</taxon>
        <taxon>Streptophyta</taxon>
        <taxon>Embryophyta</taxon>
        <taxon>Tracheophyta</taxon>
        <taxon>Spermatophyta</taxon>
        <taxon>Magnoliopsida</taxon>
        <taxon>eudicotyledons</taxon>
        <taxon>Gunneridae</taxon>
        <taxon>Pentapetalae</taxon>
        <taxon>rosids</taxon>
        <taxon>malvids</taxon>
        <taxon>Brassicales</taxon>
        <taxon>Brassicaceae</taxon>
        <taxon>Camelineae</taxon>
        <taxon>Arabidopsis</taxon>
    </lineage>
</organism>
<dbReference type="EMBL" id="AB026654">
    <property type="protein sequence ID" value="BAB01803.1"/>
    <property type="status" value="ALT_SEQ"/>
    <property type="molecule type" value="Genomic_DNA"/>
</dbReference>
<dbReference type="EMBL" id="CP002686">
    <property type="protein sequence ID" value="AEE76144.1"/>
    <property type="molecule type" value="Genomic_DNA"/>
</dbReference>
<dbReference type="EMBL" id="AK228910">
    <property type="protein sequence ID" value="BAF00799.1"/>
    <property type="molecule type" value="mRNA"/>
</dbReference>
<dbReference type="RefSeq" id="NP_188507.1">
    <property type="nucleotide sequence ID" value="NM_112763.5"/>
</dbReference>
<dbReference type="SMR" id="F4J8V5"/>
<dbReference type="FunCoup" id="F4J8V5">
    <property type="interactions" value="36"/>
</dbReference>
<dbReference type="STRING" id="3702.F4J8V5"/>
<dbReference type="iPTMnet" id="F4J8V5"/>
<dbReference type="PaxDb" id="3702-AT3G18770.1"/>
<dbReference type="ProteomicsDB" id="246818"/>
<dbReference type="EnsemblPlants" id="AT3G18770.1">
    <property type="protein sequence ID" value="AT3G18770.1"/>
    <property type="gene ID" value="AT3G18770"/>
</dbReference>
<dbReference type="GeneID" id="821408"/>
<dbReference type="Gramene" id="AT3G18770.1">
    <property type="protein sequence ID" value="AT3G18770.1"/>
    <property type="gene ID" value="AT3G18770"/>
</dbReference>
<dbReference type="KEGG" id="ath:AT3G18770"/>
<dbReference type="Araport" id="AT3G18770"/>
<dbReference type="TAIR" id="AT3G18770">
    <property type="gene designation" value="ATG13B"/>
</dbReference>
<dbReference type="eggNOG" id="KOG4573">
    <property type="taxonomic scope" value="Eukaryota"/>
</dbReference>
<dbReference type="HOGENOM" id="CLU_030687_1_0_1"/>
<dbReference type="InParanoid" id="F4J8V5"/>
<dbReference type="OMA" id="ETWNNNI"/>
<dbReference type="PRO" id="PR:F4J8V5"/>
<dbReference type="Proteomes" id="UP000006548">
    <property type="component" value="Chromosome 3"/>
</dbReference>
<dbReference type="ExpressionAtlas" id="F4J8V5">
    <property type="expression patterns" value="baseline and differential"/>
</dbReference>
<dbReference type="GO" id="GO:1990316">
    <property type="term" value="C:Atg1/ULK1 kinase complex"/>
    <property type="evidence" value="ECO:0007669"/>
    <property type="project" value="InterPro"/>
</dbReference>
<dbReference type="GO" id="GO:0005776">
    <property type="term" value="C:autophagosome"/>
    <property type="evidence" value="ECO:0007669"/>
    <property type="project" value="UniProtKB-SubCell"/>
</dbReference>
<dbReference type="GO" id="GO:0031410">
    <property type="term" value="C:cytoplasmic vesicle"/>
    <property type="evidence" value="ECO:0007669"/>
    <property type="project" value="UniProtKB-KW"/>
</dbReference>
<dbReference type="GO" id="GO:0000045">
    <property type="term" value="P:autophagosome assembly"/>
    <property type="evidence" value="ECO:0007669"/>
    <property type="project" value="InterPro"/>
</dbReference>
<dbReference type="GO" id="GO:0015031">
    <property type="term" value="P:protein transport"/>
    <property type="evidence" value="ECO:0007669"/>
    <property type="project" value="UniProtKB-KW"/>
</dbReference>
<dbReference type="FunFam" id="3.30.900.10:FF:000008">
    <property type="entry name" value="Autophagy-related protein 13b"/>
    <property type="match status" value="1"/>
</dbReference>
<dbReference type="Gene3D" id="3.30.900.10">
    <property type="entry name" value="HORMA domain"/>
    <property type="match status" value="1"/>
</dbReference>
<dbReference type="InterPro" id="IPR040182">
    <property type="entry name" value="ATG13"/>
</dbReference>
<dbReference type="InterPro" id="IPR018731">
    <property type="entry name" value="Atg13_N"/>
</dbReference>
<dbReference type="InterPro" id="IPR036570">
    <property type="entry name" value="HORMA_dom_sf"/>
</dbReference>
<dbReference type="PANTHER" id="PTHR13430">
    <property type="match status" value="1"/>
</dbReference>
<dbReference type="PANTHER" id="PTHR13430:SF15">
    <property type="entry name" value="AUTOPHAGY-RELATED PROTEIN 13B"/>
    <property type="match status" value="1"/>
</dbReference>
<dbReference type="Pfam" id="PF10033">
    <property type="entry name" value="ATG13"/>
    <property type="match status" value="1"/>
</dbReference>
<feature type="chain" id="PRO_0000434627" description="Autophagy-related protein 13b">
    <location>
        <begin position="1"/>
        <end position="625"/>
    </location>
</feature>
<feature type="region of interest" description="Disordered" evidence="2">
    <location>
        <begin position="322"/>
        <end position="388"/>
    </location>
</feature>
<feature type="region of interest" description="Disordered" evidence="2">
    <location>
        <begin position="452"/>
        <end position="527"/>
    </location>
</feature>
<feature type="region of interest" description="Disordered" evidence="2">
    <location>
        <begin position="544"/>
        <end position="564"/>
    </location>
</feature>
<feature type="compositionally biased region" description="Low complexity" evidence="2">
    <location>
        <begin position="322"/>
        <end position="332"/>
    </location>
</feature>
<feature type="compositionally biased region" description="Low complexity" evidence="2">
    <location>
        <begin position="455"/>
        <end position="477"/>
    </location>
</feature>
<feature type="compositionally biased region" description="Basic and acidic residues" evidence="2">
    <location>
        <begin position="498"/>
        <end position="518"/>
    </location>
</feature>
<feature type="sequence conflict" description="In Ref. 3; BAF00799." evidence="6" ref="3">
    <original>C</original>
    <variation>Y</variation>
    <location>
        <position position="559"/>
    </location>
</feature>
<sequence>MSSSHNRSNNNNSEGAKAEQIIFEFFAKSLHIILESRTPFMSSRNFSGEQMICSPSSSSSSSSSVRPRDKWFNLALRECPAALESFDIGRRSSLEPLVVDVVLVVRPLVGDQSGKRELIRNFSGKDYQSGWNSDQDELGCETKNEQIIERWVVQYDNRKIRESVTTSSRRSSSNKLQVMYKKATLLLRSLFVMVRLLPAYKIFRELNSSGQIFKFKLVPRVPSIVEPFTRKEEAEMQKFSFTPVETICGRLCLSVLYRSLSDVSCEHSTPMSPTFITDYVGSPLADPLKRFPSLPLSYGSPPLLPFQRRHSWSFDRYKASPPSVSCSPSPTRSDSHALVSHPCSRHLPPHPSDIPTGRRKESYPEEYSPCQDFSPPPSPSAPKHAVPRGITRTESAPVRIPAPTFQSKENVVAPSAHLKLSRHASLKPVRNLGPGESGAAIDKLFLYGRDDFRRPSGVRPSSSSSPRISFSRSSSRSFQDDFDDPDFPCPFDVEYDDITDRNSRPGSFDHRGDIHEPFDSSGSYPKKSQDAAVGALVRMLKKAPPLRQDVSESSRPEICSNNNKPAGAHEIAVASITASGIALASKTTADALEELRSYKEMKNHLLLGQSTSNPSSVTITSPFDV</sequence>
<name>AT13B_ARATH</name>
<proteinExistence type="evidence at transcript level"/>
<accession>F4J8V5</accession>
<accession>Q0WQ00</accession>
<accession>Q9LSA0</accession>
<evidence type="ECO:0000250" key="1">
    <source>
        <dbReference type="UniProtKB" id="Q9SCK0"/>
    </source>
</evidence>
<evidence type="ECO:0000256" key="2">
    <source>
        <dbReference type="SAM" id="MobiDB-lite"/>
    </source>
</evidence>
<evidence type="ECO:0000269" key="3">
    <source>
    </source>
</evidence>
<evidence type="ECO:0000303" key="4">
    <source>
    </source>
</evidence>
<evidence type="ECO:0000303" key="5">
    <source>
    </source>
</evidence>
<evidence type="ECO:0000305" key="6"/>
<evidence type="ECO:0000312" key="7">
    <source>
        <dbReference type="Araport" id="AT3G18770"/>
    </source>
</evidence>
<evidence type="ECO:0000312" key="8">
    <source>
        <dbReference type="EMBL" id="BAB01803.1"/>
    </source>
</evidence>
<comment type="function">
    <text evidence="1 3">Involved in autophagy in a nutritional condition dependent manner. The ATG1-ATG13 protein kinase complex regulates downstream events required for autophagosome enclosure and/or vacuolar delivery. Becomes a target of autophagy under nutrient starvation (By similarity). Connects autophagy to plant nutritional status (PubMed:21984698).</text>
</comment>
<comment type="subcellular location">
    <subcellularLocation>
        <location evidence="1">Cytoplasmic vesicle</location>
        <location evidence="1">Autophagosome</location>
    </subcellularLocation>
</comment>
<comment type="disruption phenotype">
    <text evidence="3">No visible phenotype under normal growth conditions. The double mutant plants atg13a-1 and atg13b-2, or atg13a-2 and atg13b-2 are hypersensitive to nitrogen or carbon starvation and show early senescence.</text>
</comment>
<comment type="similarity">
    <text evidence="6">Belongs to the ATG13 family. Plant subfamily.</text>
</comment>
<comment type="sequence caution" evidence="6">
    <conflict type="erroneous gene model prediction">
        <sequence resource="EMBL-CDS" id="BAB01803"/>
    </conflict>
</comment>
<reference key="1">
    <citation type="journal article" date="2000" name="DNA Res.">
        <title>Structural analysis of Arabidopsis thaliana chromosome 3. I. Sequence features of the regions of 4,504,864 bp covered by sixty P1 and TAC clones.</title>
        <authorList>
            <person name="Sato S."/>
            <person name="Nakamura Y."/>
            <person name="Kaneko T."/>
            <person name="Katoh T."/>
            <person name="Asamizu E."/>
            <person name="Tabata S."/>
        </authorList>
    </citation>
    <scope>NUCLEOTIDE SEQUENCE [LARGE SCALE GENOMIC DNA]</scope>
    <source>
        <strain>cv. Columbia</strain>
    </source>
</reference>
<reference key="2">
    <citation type="journal article" date="2017" name="Plant J.">
        <title>Araport11: a complete reannotation of the Arabidopsis thaliana reference genome.</title>
        <authorList>
            <person name="Cheng C.Y."/>
            <person name="Krishnakumar V."/>
            <person name="Chan A.P."/>
            <person name="Thibaud-Nissen F."/>
            <person name="Schobel S."/>
            <person name="Town C.D."/>
        </authorList>
    </citation>
    <scope>GENOME REANNOTATION</scope>
    <source>
        <strain>cv. Columbia</strain>
    </source>
</reference>
<reference key="3">
    <citation type="submission" date="2006-07" db="EMBL/GenBank/DDBJ databases">
        <title>Large-scale analysis of RIKEN Arabidopsis full-length (RAFL) cDNAs.</title>
        <authorList>
            <person name="Totoki Y."/>
            <person name="Seki M."/>
            <person name="Ishida J."/>
            <person name="Nakajima M."/>
            <person name="Enju A."/>
            <person name="Kamiya A."/>
            <person name="Narusaka M."/>
            <person name="Shin-i T."/>
            <person name="Nakagawa M."/>
            <person name="Sakamoto N."/>
            <person name="Oishi K."/>
            <person name="Kohara Y."/>
            <person name="Kobayashi M."/>
            <person name="Toyoda A."/>
            <person name="Sakaki Y."/>
            <person name="Sakurai T."/>
            <person name="Iida K."/>
            <person name="Akiyama K."/>
            <person name="Satou M."/>
            <person name="Toyoda T."/>
            <person name="Konagaya A."/>
            <person name="Carninci P."/>
            <person name="Kawai J."/>
            <person name="Hayashizaki Y."/>
            <person name="Shinozaki K."/>
        </authorList>
    </citation>
    <scope>NUCLEOTIDE SEQUENCE [LARGE SCALE MRNA] OF 65-625</scope>
    <source>
        <strain>cv. Columbia</strain>
    </source>
</reference>
<reference key="4">
    <citation type="journal article" date="2002" name="Plant Physiol.">
        <title>Leaf senescence and starvation-induced chlorosis are accelerated by the disruption of an Arabidopsis autophagy gene.</title>
        <authorList>
            <person name="Hanaoka H."/>
            <person name="Noda T."/>
            <person name="Shirano Y."/>
            <person name="Kato T."/>
            <person name="Hayashi H."/>
            <person name="Shibata D."/>
            <person name="Tabata S."/>
            <person name="Ohsumi Y."/>
        </authorList>
    </citation>
    <scope>GENE FAMILY</scope>
    <scope>NOMENCLATURE</scope>
</reference>
<reference key="5">
    <citation type="journal article" date="2011" name="Plant Cell">
        <title>The ATG1/ATG13 protein kinase complex is both a regulator and a target of autophagic recycling in Arabidopsis.</title>
        <authorList>
            <person name="Suttangkakul A."/>
            <person name="Li F."/>
            <person name="Chung T."/>
            <person name="Vierstra R.D."/>
        </authorList>
    </citation>
    <scope>FUNCTION</scope>
    <scope>DISRUPTION PHENOTYPE</scope>
</reference>
<gene>
    <name evidence="5" type="primary">ATG13B</name>
    <name evidence="7" type="ordered locus">At3g18770</name>
    <name evidence="8" type="ORF">MVE11.13</name>
</gene>